<feature type="signal peptide" evidence="2">
    <location>
        <begin position="1"/>
        <end position="18"/>
    </location>
</feature>
<feature type="propeptide" id="PRO_0000425638" evidence="1">
    <location>
        <begin position="19"/>
        <end position="24"/>
    </location>
</feature>
<feature type="chain" id="PRO_5000771381" description="Snake venom serine proteinase 5">
    <location>
        <begin position="25"/>
        <end position="258"/>
    </location>
</feature>
<feature type="domain" description="Peptidase S1" evidence="3">
    <location>
        <begin position="25"/>
        <end position="249"/>
    </location>
</feature>
<feature type="active site" description="Charge relay system" evidence="1">
    <location>
        <position position="65"/>
    </location>
</feature>
<feature type="active site" description="Charge relay system" evidence="1">
    <location>
        <position position="110"/>
    </location>
</feature>
<feature type="active site" description="Charge relay system" evidence="1">
    <location>
        <position position="204"/>
    </location>
</feature>
<feature type="glycosylation site" description="N-linked (GlcNAc...) asparagine" evidence="2">
    <location>
        <position position="44"/>
    </location>
</feature>
<feature type="disulfide bond" evidence="3">
    <location>
        <begin position="31"/>
        <end position="163"/>
    </location>
</feature>
<feature type="disulfide bond" evidence="3">
    <location>
        <begin position="50"/>
        <end position="66"/>
    </location>
</feature>
<feature type="disulfide bond" evidence="3">
    <location>
        <begin position="98"/>
        <end position="256"/>
    </location>
</feature>
<feature type="disulfide bond" evidence="3">
    <location>
        <begin position="142"/>
        <end position="210"/>
    </location>
</feature>
<feature type="disulfide bond" evidence="3">
    <location>
        <begin position="174"/>
        <end position="189"/>
    </location>
</feature>
<feature type="disulfide bond" evidence="3">
    <location>
        <begin position="200"/>
        <end position="225"/>
    </location>
</feature>
<comment type="function">
    <text evidence="1">Snake venom serine protease that may act in the hemostasis system of the prey.</text>
</comment>
<comment type="subunit">
    <text evidence="1">Monomer.</text>
</comment>
<comment type="subcellular location">
    <subcellularLocation>
        <location>Secreted</location>
    </subcellularLocation>
</comment>
<comment type="tissue specificity">
    <text>Expressed by the venom gland.</text>
</comment>
<comment type="similarity">
    <text evidence="3">Belongs to the peptidase S1 family. Snake venom subfamily.</text>
</comment>
<dbReference type="EC" id="3.4.21.-"/>
<dbReference type="EMBL" id="HQ414120">
    <property type="protein sequence ID" value="AEJ31998.1"/>
    <property type="molecule type" value="mRNA"/>
</dbReference>
<dbReference type="EMBL" id="JU173732">
    <property type="protein sequence ID" value="AFJ49258.1"/>
    <property type="molecule type" value="mRNA"/>
</dbReference>
<dbReference type="SMR" id="F8S116"/>
<dbReference type="MEROPS" id="S01.347"/>
<dbReference type="GO" id="GO:0005576">
    <property type="term" value="C:extracellular region"/>
    <property type="evidence" value="ECO:0007669"/>
    <property type="project" value="UniProtKB-SubCell"/>
</dbReference>
<dbReference type="GO" id="GO:0030141">
    <property type="term" value="C:secretory granule"/>
    <property type="evidence" value="ECO:0007669"/>
    <property type="project" value="TreeGrafter"/>
</dbReference>
<dbReference type="GO" id="GO:0004252">
    <property type="term" value="F:serine-type endopeptidase activity"/>
    <property type="evidence" value="ECO:0007669"/>
    <property type="project" value="InterPro"/>
</dbReference>
<dbReference type="GO" id="GO:0090729">
    <property type="term" value="F:toxin activity"/>
    <property type="evidence" value="ECO:0007669"/>
    <property type="project" value="UniProtKB-KW"/>
</dbReference>
<dbReference type="GO" id="GO:0006508">
    <property type="term" value="P:proteolysis"/>
    <property type="evidence" value="ECO:0007669"/>
    <property type="project" value="UniProtKB-KW"/>
</dbReference>
<dbReference type="CDD" id="cd00190">
    <property type="entry name" value="Tryp_SPc"/>
    <property type="match status" value="1"/>
</dbReference>
<dbReference type="FunFam" id="2.40.10.10:FF:000158">
    <property type="entry name" value="Thrombin-like enzyme saxthrombin"/>
    <property type="match status" value="1"/>
</dbReference>
<dbReference type="FunFam" id="2.40.10.10:FF:000153">
    <property type="entry name" value="Venom plasminogen activator TSV-PA"/>
    <property type="match status" value="1"/>
</dbReference>
<dbReference type="Gene3D" id="2.40.10.10">
    <property type="entry name" value="Trypsin-like serine proteases"/>
    <property type="match status" value="2"/>
</dbReference>
<dbReference type="InterPro" id="IPR009003">
    <property type="entry name" value="Peptidase_S1_PA"/>
</dbReference>
<dbReference type="InterPro" id="IPR043504">
    <property type="entry name" value="Peptidase_S1_PA_chymotrypsin"/>
</dbReference>
<dbReference type="InterPro" id="IPR001314">
    <property type="entry name" value="Peptidase_S1A"/>
</dbReference>
<dbReference type="InterPro" id="IPR001254">
    <property type="entry name" value="Trypsin_dom"/>
</dbReference>
<dbReference type="InterPro" id="IPR018114">
    <property type="entry name" value="TRYPSIN_HIS"/>
</dbReference>
<dbReference type="PANTHER" id="PTHR24271:SF47">
    <property type="entry name" value="KALLIKREIN-1"/>
    <property type="match status" value="1"/>
</dbReference>
<dbReference type="PANTHER" id="PTHR24271">
    <property type="entry name" value="KALLIKREIN-RELATED"/>
    <property type="match status" value="1"/>
</dbReference>
<dbReference type="Pfam" id="PF00089">
    <property type="entry name" value="Trypsin"/>
    <property type="match status" value="1"/>
</dbReference>
<dbReference type="PRINTS" id="PR00722">
    <property type="entry name" value="CHYMOTRYPSIN"/>
</dbReference>
<dbReference type="SMART" id="SM00020">
    <property type="entry name" value="Tryp_SPc"/>
    <property type="match status" value="1"/>
</dbReference>
<dbReference type="SUPFAM" id="SSF50494">
    <property type="entry name" value="Trypsin-like serine proteases"/>
    <property type="match status" value="1"/>
</dbReference>
<dbReference type="PROSITE" id="PS50240">
    <property type="entry name" value="TRYPSIN_DOM"/>
    <property type="match status" value="1"/>
</dbReference>
<dbReference type="PROSITE" id="PS00134">
    <property type="entry name" value="TRYPSIN_HIS"/>
    <property type="match status" value="1"/>
</dbReference>
<evidence type="ECO:0000250" key="1"/>
<evidence type="ECO:0000255" key="2"/>
<evidence type="ECO:0000255" key="3">
    <source>
        <dbReference type="PROSITE-ProRule" id="PRU00274"/>
    </source>
</evidence>
<protein>
    <recommendedName>
        <fullName>Snake venom serine proteinase 5</fullName>
        <shortName>SVSP</shortName>
        <ecNumber>3.4.21.-</ecNumber>
    </recommendedName>
    <alternativeName>
        <fullName>Serine proteinase 4</fullName>
    </alternativeName>
</protein>
<name>VSP5_CROAD</name>
<sequence>MVLIRVLANLLILQLSYAQKSSELVVGGDECNINEHRSLVAIFNSTEFFCSGTLINQEWVVTAAHCDSTNFKMKLGVHSKKVPNEDEQTRNPKEKFFCPNKKKDDVLDKDIMLIKLDSPVSNSEHIAPLSLPSSPPSVGSVCHIMGWGSITPIEKTLPDVPYCANINLLDDAVCRPPYPELPATSRTLCAGILEGGKDTCVVDSGGPLICNGQFQGIVFYGAHPCGQALKPGVYTKVFDYNDWIQSIIAGNTAATCPP</sequence>
<accession>F8S116</accession>
<organism>
    <name type="scientific">Crotalus adamanteus</name>
    <name type="common">Eastern diamondback rattlesnake</name>
    <dbReference type="NCBI Taxonomy" id="8729"/>
    <lineage>
        <taxon>Eukaryota</taxon>
        <taxon>Metazoa</taxon>
        <taxon>Chordata</taxon>
        <taxon>Craniata</taxon>
        <taxon>Vertebrata</taxon>
        <taxon>Euteleostomi</taxon>
        <taxon>Lepidosauria</taxon>
        <taxon>Squamata</taxon>
        <taxon>Bifurcata</taxon>
        <taxon>Unidentata</taxon>
        <taxon>Episquamata</taxon>
        <taxon>Toxicofera</taxon>
        <taxon>Serpentes</taxon>
        <taxon>Colubroidea</taxon>
        <taxon>Viperidae</taxon>
        <taxon>Crotalinae</taxon>
        <taxon>Crotalus</taxon>
    </lineage>
</organism>
<reference key="1">
    <citation type="journal article" date="2011" name="Toxicon">
        <title>A high-throughput venom-gland transcriptome for the eastern diamondback rattlesnake (Crotalus adamanteus) and evidence for pervasive positive selection across toxin classes.</title>
        <authorList>
            <person name="Rokyta D.R."/>
            <person name="Wray K.P."/>
            <person name="Lemmon A.R."/>
            <person name="Lemmon E.M."/>
            <person name="Caudle S.B."/>
        </authorList>
    </citation>
    <scope>NUCLEOTIDE SEQUENCE [MRNA]</scope>
    <source>
        <tissue>Venom gland</tissue>
    </source>
</reference>
<reference key="2">
    <citation type="journal article" date="2012" name="BMC Genomics">
        <title>The venom-gland transcriptome of the eastern diamondback rattlesnake (Crotalus adamanteus).</title>
        <authorList>
            <person name="Rokyta D.R."/>
            <person name="Lemmon A.R."/>
            <person name="Margres M.J."/>
            <person name="Aronow K."/>
        </authorList>
    </citation>
    <scope>NUCLEOTIDE SEQUENCE [MRNA]</scope>
    <source>
        <tissue>Venom gland</tissue>
    </source>
</reference>
<reference key="3">
    <citation type="journal article" date="2014" name="J. Proteomics">
        <title>Linking the transcriptome and proteome to characterize the venom of the eastern diamondback rattlesnake (Crotalus adamanteus).</title>
        <authorList>
            <person name="Margres M.J."/>
            <person name="McGivern J.J."/>
            <person name="Wray K.P."/>
            <person name="Seavy M."/>
            <person name="Calvin K."/>
            <person name="Rokyta D.R."/>
        </authorList>
    </citation>
    <scope>IDENTIFICATION BY MASS SPECTROMETRY</scope>
    <source>
        <tissue>Venom</tissue>
    </source>
</reference>
<proteinExistence type="evidence at protein level"/>
<keyword id="KW-1015">Disulfide bond</keyword>
<keyword id="KW-0325">Glycoprotein</keyword>
<keyword id="KW-1199">Hemostasis impairing toxin</keyword>
<keyword id="KW-0378">Hydrolase</keyword>
<keyword id="KW-0645">Protease</keyword>
<keyword id="KW-0964">Secreted</keyword>
<keyword id="KW-0720">Serine protease</keyword>
<keyword id="KW-0732">Signal</keyword>
<keyword id="KW-0800">Toxin</keyword>
<keyword id="KW-0865">Zymogen</keyword>